<sequence length="382" mass="40583">MLEFEMDMDQLAQIKVIGVGGGGSNAVNRMIENGLQGVDFISVNTDAQALHLSKAEVKLQLGGKLTRGLGAGANPEIGKKAAEESREQIEEALQGADMVFITAGMGGGTGTGAAPVIAEVAKEIGALTVGVVTRPFTFEGRKRSTQAAAGIAALKEKVDTLIVIPNDRLLEIVDKNTPMLEAFREADNVLRQGVQGISDLIATPGLINLDFADVKTIMKDKGSALMGIGIATGENRAGEAAKKAISSPLLETSLDGAQGVLMNITGGSNLSLYEVHEAAEIVSAASDAEVNMIFGSVINEDLKDEIVVTVIATGFDDAENRRAQQQSNFNRQAAPKQPLKSKEKEAEKKEPRFTSQPEADDNESLDTLDIPAFLRNRRRKSR</sequence>
<reference key="1">
    <citation type="journal article" date="2000" name="Nucleic Acids Res.">
        <title>Complete genome sequence of the alkaliphilic bacterium Bacillus halodurans and genomic sequence comparison with Bacillus subtilis.</title>
        <authorList>
            <person name="Takami H."/>
            <person name="Nakasone K."/>
            <person name="Takaki Y."/>
            <person name="Maeno G."/>
            <person name="Sasaki R."/>
            <person name="Masui N."/>
            <person name="Fuji F."/>
            <person name="Hirama C."/>
            <person name="Nakamura Y."/>
            <person name="Ogasawara N."/>
            <person name="Kuhara S."/>
            <person name="Horikoshi K."/>
        </authorList>
    </citation>
    <scope>NUCLEOTIDE SEQUENCE [LARGE SCALE GENOMIC DNA]</scope>
    <source>
        <strain>ATCC BAA-125 / DSM 18197 / FERM 7344 / JCM 9153 / C-125</strain>
    </source>
</reference>
<feature type="chain" id="PRO_0000114340" description="Cell division protein FtsZ">
    <location>
        <begin position="1"/>
        <end position="382"/>
    </location>
</feature>
<feature type="region of interest" description="Disordered" evidence="2">
    <location>
        <begin position="322"/>
        <end position="382"/>
    </location>
</feature>
<feature type="compositionally biased region" description="Basic and acidic residues" evidence="2">
    <location>
        <begin position="340"/>
        <end position="352"/>
    </location>
</feature>
<feature type="binding site" evidence="1">
    <location>
        <begin position="21"/>
        <end position="25"/>
    </location>
    <ligand>
        <name>GTP</name>
        <dbReference type="ChEBI" id="CHEBI:37565"/>
    </ligand>
</feature>
<feature type="binding site" evidence="1">
    <location>
        <begin position="108"/>
        <end position="110"/>
    </location>
    <ligand>
        <name>GTP</name>
        <dbReference type="ChEBI" id="CHEBI:37565"/>
    </ligand>
</feature>
<feature type="binding site" evidence="1">
    <location>
        <position position="139"/>
    </location>
    <ligand>
        <name>GTP</name>
        <dbReference type="ChEBI" id="CHEBI:37565"/>
    </ligand>
</feature>
<feature type="binding site" evidence="1">
    <location>
        <position position="143"/>
    </location>
    <ligand>
        <name>GTP</name>
        <dbReference type="ChEBI" id="CHEBI:37565"/>
    </ligand>
</feature>
<feature type="binding site" evidence="1">
    <location>
        <position position="187"/>
    </location>
    <ligand>
        <name>GTP</name>
        <dbReference type="ChEBI" id="CHEBI:37565"/>
    </ligand>
</feature>
<proteinExistence type="inferred from homology"/>
<name>FTSZ_HALH5</name>
<organism>
    <name type="scientific">Halalkalibacterium halodurans (strain ATCC BAA-125 / DSM 18197 / FERM 7344 / JCM 9153 / C-125)</name>
    <name type="common">Bacillus halodurans</name>
    <dbReference type="NCBI Taxonomy" id="272558"/>
    <lineage>
        <taxon>Bacteria</taxon>
        <taxon>Bacillati</taxon>
        <taxon>Bacillota</taxon>
        <taxon>Bacilli</taxon>
        <taxon>Bacillales</taxon>
        <taxon>Bacillaceae</taxon>
        <taxon>Halalkalibacterium (ex Joshi et al. 2022)</taxon>
    </lineage>
</organism>
<keyword id="KW-0131">Cell cycle</keyword>
<keyword id="KW-0132">Cell division</keyword>
<keyword id="KW-0963">Cytoplasm</keyword>
<keyword id="KW-0342">GTP-binding</keyword>
<keyword id="KW-0547">Nucleotide-binding</keyword>
<keyword id="KW-1185">Reference proteome</keyword>
<keyword id="KW-0717">Septation</keyword>
<protein>
    <recommendedName>
        <fullName evidence="1">Cell division protein FtsZ</fullName>
    </recommendedName>
</protein>
<dbReference type="EMBL" id="BA000004">
    <property type="protein sequence ID" value="BAB06277.1"/>
    <property type="molecule type" value="Genomic_DNA"/>
</dbReference>
<dbReference type="PIR" id="F83969">
    <property type="entry name" value="F83969"/>
</dbReference>
<dbReference type="RefSeq" id="WP_010898709.1">
    <property type="nucleotide sequence ID" value="NC_002570.2"/>
</dbReference>
<dbReference type="SMR" id="Q9K9T7"/>
<dbReference type="STRING" id="272558.gene:10728456"/>
<dbReference type="GeneID" id="87598071"/>
<dbReference type="KEGG" id="bha:BH2558"/>
<dbReference type="eggNOG" id="COG0206">
    <property type="taxonomic scope" value="Bacteria"/>
</dbReference>
<dbReference type="HOGENOM" id="CLU_024865_0_1_9"/>
<dbReference type="OrthoDB" id="9813375at2"/>
<dbReference type="Proteomes" id="UP000001258">
    <property type="component" value="Chromosome"/>
</dbReference>
<dbReference type="GO" id="GO:0032153">
    <property type="term" value="C:cell division site"/>
    <property type="evidence" value="ECO:0007669"/>
    <property type="project" value="UniProtKB-UniRule"/>
</dbReference>
<dbReference type="GO" id="GO:0005737">
    <property type="term" value="C:cytoplasm"/>
    <property type="evidence" value="ECO:0007669"/>
    <property type="project" value="UniProtKB-SubCell"/>
</dbReference>
<dbReference type="GO" id="GO:0005525">
    <property type="term" value="F:GTP binding"/>
    <property type="evidence" value="ECO:0007669"/>
    <property type="project" value="UniProtKB-UniRule"/>
</dbReference>
<dbReference type="GO" id="GO:0003924">
    <property type="term" value="F:GTPase activity"/>
    <property type="evidence" value="ECO:0007669"/>
    <property type="project" value="UniProtKB-UniRule"/>
</dbReference>
<dbReference type="GO" id="GO:0000917">
    <property type="term" value="P:division septum assembly"/>
    <property type="evidence" value="ECO:0007669"/>
    <property type="project" value="UniProtKB-KW"/>
</dbReference>
<dbReference type="GO" id="GO:0043093">
    <property type="term" value="P:FtsZ-dependent cytokinesis"/>
    <property type="evidence" value="ECO:0007669"/>
    <property type="project" value="UniProtKB-UniRule"/>
</dbReference>
<dbReference type="GO" id="GO:0051258">
    <property type="term" value="P:protein polymerization"/>
    <property type="evidence" value="ECO:0007669"/>
    <property type="project" value="UniProtKB-UniRule"/>
</dbReference>
<dbReference type="CDD" id="cd02201">
    <property type="entry name" value="FtsZ_type1"/>
    <property type="match status" value="1"/>
</dbReference>
<dbReference type="FunFam" id="3.30.1330.20:FF:000005">
    <property type="entry name" value="Cell division protein FtsZ"/>
    <property type="match status" value="1"/>
</dbReference>
<dbReference type="FunFam" id="3.40.50.1440:FF:000023">
    <property type="entry name" value="Cell division protein FtsZ"/>
    <property type="match status" value="1"/>
</dbReference>
<dbReference type="Gene3D" id="3.30.1330.20">
    <property type="entry name" value="Tubulin/FtsZ, C-terminal domain"/>
    <property type="match status" value="1"/>
</dbReference>
<dbReference type="Gene3D" id="3.40.50.1440">
    <property type="entry name" value="Tubulin/FtsZ, GTPase domain"/>
    <property type="match status" value="1"/>
</dbReference>
<dbReference type="HAMAP" id="MF_00909">
    <property type="entry name" value="FtsZ"/>
    <property type="match status" value="1"/>
</dbReference>
<dbReference type="InterPro" id="IPR000158">
    <property type="entry name" value="Cell_div_FtsZ"/>
</dbReference>
<dbReference type="InterPro" id="IPR020805">
    <property type="entry name" value="Cell_div_FtsZ_CS"/>
</dbReference>
<dbReference type="InterPro" id="IPR045061">
    <property type="entry name" value="FtsZ/CetZ"/>
</dbReference>
<dbReference type="InterPro" id="IPR024757">
    <property type="entry name" value="FtsZ_C"/>
</dbReference>
<dbReference type="InterPro" id="IPR008280">
    <property type="entry name" value="Tub_FtsZ_C"/>
</dbReference>
<dbReference type="InterPro" id="IPR037103">
    <property type="entry name" value="Tubulin/FtsZ-like_C"/>
</dbReference>
<dbReference type="InterPro" id="IPR018316">
    <property type="entry name" value="Tubulin/FtsZ_2-layer-sand-dom"/>
</dbReference>
<dbReference type="InterPro" id="IPR036525">
    <property type="entry name" value="Tubulin/FtsZ_GTPase_sf"/>
</dbReference>
<dbReference type="InterPro" id="IPR003008">
    <property type="entry name" value="Tubulin_FtsZ_GTPase"/>
</dbReference>
<dbReference type="NCBIfam" id="TIGR00065">
    <property type="entry name" value="ftsZ"/>
    <property type="match status" value="1"/>
</dbReference>
<dbReference type="PANTHER" id="PTHR30314">
    <property type="entry name" value="CELL DIVISION PROTEIN FTSZ-RELATED"/>
    <property type="match status" value="1"/>
</dbReference>
<dbReference type="PANTHER" id="PTHR30314:SF3">
    <property type="entry name" value="MITOCHONDRIAL DIVISION PROTEIN FSZA"/>
    <property type="match status" value="1"/>
</dbReference>
<dbReference type="Pfam" id="PF12327">
    <property type="entry name" value="FtsZ_C"/>
    <property type="match status" value="1"/>
</dbReference>
<dbReference type="Pfam" id="PF00091">
    <property type="entry name" value="Tubulin"/>
    <property type="match status" value="1"/>
</dbReference>
<dbReference type="PRINTS" id="PR00423">
    <property type="entry name" value="CELLDVISFTSZ"/>
</dbReference>
<dbReference type="SMART" id="SM00864">
    <property type="entry name" value="Tubulin"/>
    <property type="match status" value="1"/>
</dbReference>
<dbReference type="SMART" id="SM00865">
    <property type="entry name" value="Tubulin_C"/>
    <property type="match status" value="1"/>
</dbReference>
<dbReference type="SUPFAM" id="SSF55307">
    <property type="entry name" value="Tubulin C-terminal domain-like"/>
    <property type="match status" value="1"/>
</dbReference>
<dbReference type="SUPFAM" id="SSF52490">
    <property type="entry name" value="Tubulin nucleotide-binding domain-like"/>
    <property type="match status" value="1"/>
</dbReference>
<dbReference type="PROSITE" id="PS01134">
    <property type="entry name" value="FTSZ_1"/>
    <property type="match status" value="1"/>
</dbReference>
<dbReference type="PROSITE" id="PS01135">
    <property type="entry name" value="FTSZ_2"/>
    <property type="match status" value="1"/>
</dbReference>
<evidence type="ECO:0000255" key="1">
    <source>
        <dbReference type="HAMAP-Rule" id="MF_00909"/>
    </source>
</evidence>
<evidence type="ECO:0000256" key="2">
    <source>
        <dbReference type="SAM" id="MobiDB-lite"/>
    </source>
</evidence>
<gene>
    <name evidence="1" type="primary">ftsZ</name>
    <name type="ordered locus">BH2558</name>
</gene>
<comment type="function">
    <text evidence="1">Essential cell division protein that forms a contractile ring structure (Z ring) at the future cell division site. The regulation of the ring assembly controls the timing and the location of cell division. One of the functions of the FtsZ ring is to recruit other cell division proteins to the septum to produce a new cell wall between the dividing cells. Binds GTP and shows GTPase activity.</text>
</comment>
<comment type="subunit">
    <text evidence="1">Homodimer. Polymerizes to form a dynamic ring structure in a strictly GTP-dependent manner. Interacts directly with several other division proteins.</text>
</comment>
<comment type="subcellular location">
    <subcellularLocation>
        <location evidence="1">Cytoplasm</location>
    </subcellularLocation>
    <text evidence="1">Assembles at midcell at the inner surface of the cytoplasmic membrane.</text>
</comment>
<comment type="similarity">
    <text evidence="1">Belongs to the FtsZ family.</text>
</comment>
<accession>Q9K9T7</accession>